<sequence>MTARDFKNYLEPLREGKNLLGFSGGLDSTCLFHLLVGENIAFDIALVDYSTQKQRLEIIQHAQKLAQTHHKKCYIHYAPKIARNFEMQARKVRYDFFETLIKEHSYKHLILAHHLNDRLEWFLMQLSKGAGLNTLLSFQAYEKRESYAIVRPLLYTPKDTLKTLAKDQKFFEDDSNSSLKFKRNCFRKHYANALMQHYSKGIIQSFKFLDKEKERLYPLIPVSQMHGITFFKHSHNALFMVDKILKKKGYVLSFLQKEEIKHHFFSLEIAQKFIIEKDKEHVFIAFKPQKTLSMPKDFKDRARRLDIPKRLRPVLYAEFLKQPTHDFLTRFKQSLMDL</sequence>
<dbReference type="EC" id="6.3.4.19" evidence="1"/>
<dbReference type="EMBL" id="AE001439">
    <property type="protein sequence ID" value="AAD06249.1"/>
    <property type="molecule type" value="Genomic_DNA"/>
</dbReference>
<dbReference type="PIR" id="G71901">
    <property type="entry name" value="G71901"/>
</dbReference>
<dbReference type="RefSeq" id="WP_000126883.1">
    <property type="nucleotide sequence ID" value="NC_000921.1"/>
</dbReference>
<dbReference type="SMR" id="Q9ZLB5"/>
<dbReference type="KEGG" id="hpj:jhp_0665"/>
<dbReference type="PATRIC" id="fig|85963.30.peg.315"/>
<dbReference type="eggNOG" id="COG0037">
    <property type="taxonomic scope" value="Bacteria"/>
</dbReference>
<dbReference type="Proteomes" id="UP000000804">
    <property type="component" value="Chromosome"/>
</dbReference>
<dbReference type="GO" id="GO:0005737">
    <property type="term" value="C:cytoplasm"/>
    <property type="evidence" value="ECO:0007669"/>
    <property type="project" value="UniProtKB-SubCell"/>
</dbReference>
<dbReference type="GO" id="GO:0005524">
    <property type="term" value="F:ATP binding"/>
    <property type="evidence" value="ECO:0007669"/>
    <property type="project" value="UniProtKB-UniRule"/>
</dbReference>
<dbReference type="GO" id="GO:0032267">
    <property type="term" value="F:tRNA(Ile)-lysidine synthase activity"/>
    <property type="evidence" value="ECO:0007669"/>
    <property type="project" value="UniProtKB-EC"/>
</dbReference>
<dbReference type="GO" id="GO:0006400">
    <property type="term" value="P:tRNA modification"/>
    <property type="evidence" value="ECO:0007669"/>
    <property type="project" value="UniProtKB-UniRule"/>
</dbReference>
<dbReference type="CDD" id="cd01992">
    <property type="entry name" value="TilS_N"/>
    <property type="match status" value="1"/>
</dbReference>
<dbReference type="Gene3D" id="3.40.50.620">
    <property type="entry name" value="HUPs"/>
    <property type="match status" value="1"/>
</dbReference>
<dbReference type="HAMAP" id="MF_01161">
    <property type="entry name" value="tRNA_Ile_lys_synt"/>
    <property type="match status" value="1"/>
</dbReference>
<dbReference type="InterPro" id="IPR014729">
    <property type="entry name" value="Rossmann-like_a/b/a_fold"/>
</dbReference>
<dbReference type="InterPro" id="IPR011063">
    <property type="entry name" value="TilS/TtcA_N"/>
</dbReference>
<dbReference type="InterPro" id="IPR012094">
    <property type="entry name" value="tRNA_Ile_lys_synt"/>
</dbReference>
<dbReference type="InterPro" id="IPR012795">
    <property type="entry name" value="tRNA_Ile_lys_synt_N"/>
</dbReference>
<dbReference type="NCBIfam" id="TIGR02432">
    <property type="entry name" value="lysidine_TilS_N"/>
    <property type="match status" value="1"/>
</dbReference>
<dbReference type="PANTHER" id="PTHR43033">
    <property type="entry name" value="TRNA(ILE)-LYSIDINE SYNTHASE-RELATED"/>
    <property type="match status" value="1"/>
</dbReference>
<dbReference type="PANTHER" id="PTHR43033:SF1">
    <property type="entry name" value="TRNA(ILE)-LYSIDINE SYNTHASE-RELATED"/>
    <property type="match status" value="1"/>
</dbReference>
<dbReference type="Pfam" id="PF01171">
    <property type="entry name" value="ATP_bind_3"/>
    <property type="match status" value="1"/>
</dbReference>
<dbReference type="SUPFAM" id="SSF52402">
    <property type="entry name" value="Adenine nucleotide alpha hydrolases-like"/>
    <property type="match status" value="1"/>
</dbReference>
<organism>
    <name type="scientific">Helicobacter pylori (strain J99 / ATCC 700824)</name>
    <name type="common">Campylobacter pylori J99</name>
    <dbReference type="NCBI Taxonomy" id="85963"/>
    <lineage>
        <taxon>Bacteria</taxon>
        <taxon>Pseudomonadati</taxon>
        <taxon>Campylobacterota</taxon>
        <taxon>Epsilonproteobacteria</taxon>
        <taxon>Campylobacterales</taxon>
        <taxon>Helicobacteraceae</taxon>
        <taxon>Helicobacter</taxon>
    </lineage>
</organism>
<feature type="chain" id="PRO_0000181704" description="tRNA(Ile)-lysidine synthase">
    <location>
        <begin position="1"/>
        <end position="338"/>
    </location>
</feature>
<feature type="binding site" evidence="1">
    <location>
        <begin position="23"/>
        <end position="28"/>
    </location>
    <ligand>
        <name>ATP</name>
        <dbReference type="ChEBI" id="CHEBI:30616"/>
    </ligand>
</feature>
<name>TILS_HELPJ</name>
<gene>
    <name evidence="1" type="primary">tilS</name>
    <name type="ordered locus">jhp_0665</name>
</gene>
<keyword id="KW-0067">ATP-binding</keyword>
<keyword id="KW-0963">Cytoplasm</keyword>
<keyword id="KW-0436">Ligase</keyword>
<keyword id="KW-0547">Nucleotide-binding</keyword>
<keyword id="KW-0819">tRNA processing</keyword>
<evidence type="ECO:0000255" key="1">
    <source>
        <dbReference type="HAMAP-Rule" id="MF_01161"/>
    </source>
</evidence>
<comment type="function">
    <text evidence="1">Ligates lysine onto the cytidine present at position 34 of the AUA codon-specific tRNA(Ile) that contains the anticodon CAU, in an ATP-dependent manner. Cytidine is converted to lysidine, thus changing the amino acid specificity of the tRNA from methionine to isoleucine.</text>
</comment>
<comment type="catalytic activity">
    <reaction evidence="1">
        <text>cytidine(34) in tRNA(Ile2) + L-lysine + ATP = lysidine(34) in tRNA(Ile2) + AMP + diphosphate + H(+)</text>
        <dbReference type="Rhea" id="RHEA:43744"/>
        <dbReference type="Rhea" id="RHEA-COMP:10625"/>
        <dbReference type="Rhea" id="RHEA-COMP:10670"/>
        <dbReference type="ChEBI" id="CHEBI:15378"/>
        <dbReference type="ChEBI" id="CHEBI:30616"/>
        <dbReference type="ChEBI" id="CHEBI:32551"/>
        <dbReference type="ChEBI" id="CHEBI:33019"/>
        <dbReference type="ChEBI" id="CHEBI:82748"/>
        <dbReference type="ChEBI" id="CHEBI:83665"/>
        <dbReference type="ChEBI" id="CHEBI:456215"/>
        <dbReference type="EC" id="6.3.4.19"/>
    </reaction>
</comment>
<comment type="subcellular location">
    <subcellularLocation>
        <location evidence="1">Cytoplasm</location>
    </subcellularLocation>
</comment>
<comment type="domain">
    <text>The N-terminal region contains the highly conserved SGGXDS motif, predicted to be a P-loop motif involved in ATP binding.</text>
</comment>
<comment type="similarity">
    <text evidence="1">Belongs to the tRNA(Ile)-lysidine synthase family.</text>
</comment>
<reference key="1">
    <citation type="journal article" date="1999" name="Nature">
        <title>Genomic sequence comparison of two unrelated isolates of the human gastric pathogen Helicobacter pylori.</title>
        <authorList>
            <person name="Alm R.A."/>
            <person name="Ling L.-S.L."/>
            <person name="Moir D.T."/>
            <person name="King B.L."/>
            <person name="Brown E.D."/>
            <person name="Doig P.C."/>
            <person name="Smith D.R."/>
            <person name="Noonan B."/>
            <person name="Guild B.C."/>
            <person name="deJonge B.L."/>
            <person name="Carmel G."/>
            <person name="Tummino P.J."/>
            <person name="Caruso A."/>
            <person name="Uria-Nickelsen M."/>
            <person name="Mills D.M."/>
            <person name="Ives C."/>
            <person name="Gibson R."/>
            <person name="Merberg D."/>
            <person name="Mills S.D."/>
            <person name="Jiang Q."/>
            <person name="Taylor D.E."/>
            <person name="Vovis G.F."/>
            <person name="Trust T.J."/>
        </authorList>
    </citation>
    <scope>NUCLEOTIDE SEQUENCE [LARGE SCALE GENOMIC DNA]</scope>
    <source>
        <strain>J99 / ATCC 700824</strain>
    </source>
</reference>
<accession>Q9ZLB5</accession>
<proteinExistence type="inferred from homology"/>
<protein>
    <recommendedName>
        <fullName evidence="1">tRNA(Ile)-lysidine synthase</fullName>
        <ecNumber evidence="1">6.3.4.19</ecNumber>
    </recommendedName>
    <alternativeName>
        <fullName evidence="1">tRNA(Ile)-2-lysyl-cytidine synthase</fullName>
    </alternativeName>
    <alternativeName>
        <fullName evidence="1">tRNA(Ile)-lysidine synthetase</fullName>
    </alternativeName>
</protein>